<evidence type="ECO:0000255" key="1">
    <source>
        <dbReference type="HAMAP-Rule" id="MF_00380"/>
    </source>
</evidence>
<sequence>MSDKTLTRADLAESVYREVGLSRQESADLVQSVLAMVSDNLAAGQSVKLSSFGSFLLRDKRGRVGRNPKTGVEVPIDARRVLVFKPSQVLKERVDSALSKD</sequence>
<keyword id="KW-0233">DNA recombination</keyword>
<keyword id="KW-0238">DNA-binding</keyword>
<keyword id="KW-1185">Reference proteome</keyword>
<keyword id="KW-0804">Transcription</keyword>
<keyword id="KW-0805">Transcription regulation</keyword>
<keyword id="KW-0810">Translation regulation</keyword>
<protein>
    <recommendedName>
        <fullName evidence="1">Integration host factor subunit alpha</fullName>
        <shortName evidence="1">IHF-alpha</shortName>
    </recommendedName>
</protein>
<gene>
    <name evidence="1" type="primary">ihfA</name>
    <name evidence="1" type="synonym">himA</name>
    <name type="ordered locus">Mmar10_1522</name>
</gene>
<proteinExistence type="inferred from homology"/>
<dbReference type="EMBL" id="CP000449">
    <property type="protein sequence ID" value="ABI65814.1"/>
    <property type="molecule type" value="Genomic_DNA"/>
</dbReference>
<dbReference type="RefSeq" id="WP_011643461.1">
    <property type="nucleotide sequence ID" value="NC_008347.1"/>
</dbReference>
<dbReference type="SMR" id="Q0APH3"/>
<dbReference type="STRING" id="394221.Mmar10_1522"/>
<dbReference type="KEGG" id="mmr:Mmar10_1522"/>
<dbReference type="eggNOG" id="COG0776">
    <property type="taxonomic scope" value="Bacteria"/>
</dbReference>
<dbReference type="HOGENOM" id="CLU_105066_1_1_5"/>
<dbReference type="OrthoDB" id="9797747at2"/>
<dbReference type="Proteomes" id="UP000001964">
    <property type="component" value="Chromosome"/>
</dbReference>
<dbReference type="GO" id="GO:0005829">
    <property type="term" value="C:cytosol"/>
    <property type="evidence" value="ECO:0007669"/>
    <property type="project" value="TreeGrafter"/>
</dbReference>
<dbReference type="GO" id="GO:0003677">
    <property type="term" value="F:DNA binding"/>
    <property type="evidence" value="ECO:0007669"/>
    <property type="project" value="UniProtKB-UniRule"/>
</dbReference>
<dbReference type="GO" id="GO:0030527">
    <property type="term" value="F:structural constituent of chromatin"/>
    <property type="evidence" value="ECO:0007669"/>
    <property type="project" value="InterPro"/>
</dbReference>
<dbReference type="GO" id="GO:0006310">
    <property type="term" value="P:DNA recombination"/>
    <property type="evidence" value="ECO:0007669"/>
    <property type="project" value="UniProtKB-UniRule"/>
</dbReference>
<dbReference type="GO" id="GO:0009893">
    <property type="term" value="P:positive regulation of metabolic process"/>
    <property type="evidence" value="ECO:0007669"/>
    <property type="project" value="UniProtKB-ARBA"/>
</dbReference>
<dbReference type="GO" id="GO:0006355">
    <property type="term" value="P:regulation of DNA-templated transcription"/>
    <property type="evidence" value="ECO:0007669"/>
    <property type="project" value="UniProtKB-UniRule"/>
</dbReference>
<dbReference type="GO" id="GO:0006417">
    <property type="term" value="P:regulation of translation"/>
    <property type="evidence" value="ECO:0007669"/>
    <property type="project" value="UniProtKB-UniRule"/>
</dbReference>
<dbReference type="CDD" id="cd13835">
    <property type="entry name" value="IHF_A"/>
    <property type="match status" value="1"/>
</dbReference>
<dbReference type="Gene3D" id="4.10.520.10">
    <property type="entry name" value="IHF-like DNA-binding proteins"/>
    <property type="match status" value="1"/>
</dbReference>
<dbReference type="HAMAP" id="MF_00380">
    <property type="entry name" value="IHF_alpha"/>
    <property type="match status" value="1"/>
</dbReference>
<dbReference type="InterPro" id="IPR000119">
    <property type="entry name" value="Hist_DNA-bd"/>
</dbReference>
<dbReference type="InterPro" id="IPR020816">
    <property type="entry name" value="Histone-like_DNA-bd_CS"/>
</dbReference>
<dbReference type="InterPro" id="IPR010992">
    <property type="entry name" value="IHF-like_DNA-bd_dom_sf"/>
</dbReference>
<dbReference type="InterPro" id="IPR005684">
    <property type="entry name" value="IHF_alpha"/>
</dbReference>
<dbReference type="NCBIfam" id="TIGR00987">
    <property type="entry name" value="himA"/>
    <property type="match status" value="1"/>
</dbReference>
<dbReference type="NCBIfam" id="NF001401">
    <property type="entry name" value="PRK00285.1"/>
    <property type="match status" value="1"/>
</dbReference>
<dbReference type="PANTHER" id="PTHR33175">
    <property type="entry name" value="DNA-BINDING PROTEIN HU"/>
    <property type="match status" value="1"/>
</dbReference>
<dbReference type="PANTHER" id="PTHR33175:SF2">
    <property type="entry name" value="INTEGRATION HOST FACTOR SUBUNIT ALPHA"/>
    <property type="match status" value="1"/>
</dbReference>
<dbReference type="Pfam" id="PF00216">
    <property type="entry name" value="Bac_DNA_binding"/>
    <property type="match status" value="1"/>
</dbReference>
<dbReference type="PRINTS" id="PR01727">
    <property type="entry name" value="DNABINDINGHU"/>
</dbReference>
<dbReference type="SMART" id="SM00411">
    <property type="entry name" value="BHL"/>
    <property type="match status" value="1"/>
</dbReference>
<dbReference type="SUPFAM" id="SSF47729">
    <property type="entry name" value="IHF-like DNA-binding proteins"/>
    <property type="match status" value="1"/>
</dbReference>
<dbReference type="PROSITE" id="PS00045">
    <property type="entry name" value="HISTONE_LIKE"/>
    <property type="match status" value="1"/>
</dbReference>
<reference key="1">
    <citation type="submission" date="2006-08" db="EMBL/GenBank/DDBJ databases">
        <title>Complete sequence of Maricaulis maris MCS10.</title>
        <authorList>
            <consortium name="US DOE Joint Genome Institute"/>
            <person name="Copeland A."/>
            <person name="Lucas S."/>
            <person name="Lapidus A."/>
            <person name="Barry K."/>
            <person name="Detter J.C."/>
            <person name="Glavina del Rio T."/>
            <person name="Hammon N."/>
            <person name="Israni S."/>
            <person name="Dalin E."/>
            <person name="Tice H."/>
            <person name="Pitluck S."/>
            <person name="Saunders E."/>
            <person name="Brettin T."/>
            <person name="Bruce D."/>
            <person name="Han C."/>
            <person name="Tapia R."/>
            <person name="Gilna P."/>
            <person name="Schmutz J."/>
            <person name="Larimer F."/>
            <person name="Land M."/>
            <person name="Hauser L."/>
            <person name="Kyrpides N."/>
            <person name="Mikhailova N."/>
            <person name="Viollier P."/>
            <person name="Stephens C."/>
            <person name="Richardson P."/>
        </authorList>
    </citation>
    <scope>NUCLEOTIDE SEQUENCE [LARGE SCALE GENOMIC DNA]</scope>
    <source>
        <strain>MCS10</strain>
    </source>
</reference>
<organism>
    <name type="scientific">Maricaulis maris (strain MCS10)</name>
    <name type="common">Caulobacter maris</name>
    <dbReference type="NCBI Taxonomy" id="394221"/>
    <lineage>
        <taxon>Bacteria</taxon>
        <taxon>Pseudomonadati</taxon>
        <taxon>Pseudomonadota</taxon>
        <taxon>Alphaproteobacteria</taxon>
        <taxon>Maricaulales</taxon>
        <taxon>Maricaulaceae</taxon>
        <taxon>Maricaulis</taxon>
    </lineage>
</organism>
<name>IHFA_MARMM</name>
<comment type="function">
    <text evidence="1">This protein is one of the two subunits of integration host factor, a specific DNA-binding protein that functions in genetic recombination as well as in transcriptional and translational control.</text>
</comment>
<comment type="subunit">
    <text evidence="1">Heterodimer of an alpha and a beta chain.</text>
</comment>
<comment type="similarity">
    <text evidence="1">Belongs to the bacterial histone-like protein family.</text>
</comment>
<feature type="chain" id="PRO_0000277742" description="Integration host factor subunit alpha">
    <location>
        <begin position="1"/>
        <end position="101"/>
    </location>
</feature>
<accession>Q0APH3</accession>